<protein>
    <recommendedName>
        <fullName evidence="1">Ribulose bisphosphate carboxylase large chain</fullName>
        <shortName evidence="1">RuBisCO large subunit</shortName>
        <ecNumber evidence="1">4.1.1.39</ecNumber>
    </recommendedName>
</protein>
<organism>
    <name type="scientific">Cruciata glabra</name>
    <name type="common">Slender crosswort</name>
    <name type="synonym">Valantia glabra</name>
    <dbReference type="NCBI Taxonomy" id="29785"/>
    <lineage>
        <taxon>Eukaryota</taxon>
        <taxon>Viridiplantae</taxon>
        <taxon>Streptophyta</taxon>
        <taxon>Embryophyta</taxon>
        <taxon>Tracheophyta</taxon>
        <taxon>Spermatophyta</taxon>
        <taxon>Magnoliopsida</taxon>
        <taxon>eudicotyledons</taxon>
        <taxon>Gunneridae</taxon>
        <taxon>Pentapetalae</taxon>
        <taxon>asterids</taxon>
        <taxon>lamiids</taxon>
        <taxon>Gentianales</taxon>
        <taxon>Rubiaceae</taxon>
        <taxon>Rubioideae</taxon>
        <taxon>Rubieae</taxon>
        <taxon>Cruciata</taxon>
    </lineage>
</organism>
<comment type="function">
    <text evidence="1">RuBisCO catalyzes two reactions: the carboxylation of D-ribulose 1,5-bisphosphate, the primary event in carbon dioxide fixation, as well as the oxidative fragmentation of the pentose substrate in the photorespiration process. Both reactions occur simultaneously and in competition at the same active site.</text>
</comment>
<comment type="catalytic activity">
    <reaction evidence="1">
        <text>2 (2R)-3-phosphoglycerate + 2 H(+) = D-ribulose 1,5-bisphosphate + CO2 + H2O</text>
        <dbReference type="Rhea" id="RHEA:23124"/>
        <dbReference type="ChEBI" id="CHEBI:15377"/>
        <dbReference type="ChEBI" id="CHEBI:15378"/>
        <dbReference type="ChEBI" id="CHEBI:16526"/>
        <dbReference type="ChEBI" id="CHEBI:57870"/>
        <dbReference type="ChEBI" id="CHEBI:58272"/>
        <dbReference type="EC" id="4.1.1.39"/>
    </reaction>
</comment>
<comment type="catalytic activity">
    <reaction evidence="1">
        <text>D-ribulose 1,5-bisphosphate + O2 = 2-phosphoglycolate + (2R)-3-phosphoglycerate + 2 H(+)</text>
        <dbReference type="Rhea" id="RHEA:36631"/>
        <dbReference type="ChEBI" id="CHEBI:15378"/>
        <dbReference type="ChEBI" id="CHEBI:15379"/>
        <dbReference type="ChEBI" id="CHEBI:57870"/>
        <dbReference type="ChEBI" id="CHEBI:58033"/>
        <dbReference type="ChEBI" id="CHEBI:58272"/>
    </reaction>
</comment>
<comment type="cofactor">
    <cofactor evidence="1">
        <name>Mg(2+)</name>
        <dbReference type="ChEBI" id="CHEBI:18420"/>
    </cofactor>
    <text evidence="1">Binds 1 Mg(2+) ion per subunit.</text>
</comment>
<comment type="subunit">
    <text evidence="1">Heterohexadecamer of 8 large chains and 8 small chains; disulfide-linked. The disulfide link is formed within the large subunit homodimers.</text>
</comment>
<comment type="subcellular location">
    <subcellularLocation>
        <location>Plastid</location>
        <location>Chloroplast</location>
    </subcellularLocation>
</comment>
<comment type="PTM">
    <text evidence="1">The disulfide bond which can form in the large chain dimeric partners within the hexadecamer appears to be associated with oxidative stress and protein turnover.</text>
</comment>
<comment type="miscellaneous">
    <text evidence="1">The basic functional RuBisCO is composed of a large chain homodimer in a 'head-to-tail' conformation. In form I RuBisCO this homodimer is arranged in a barrel-like tetramer with the small subunits forming a tetrameric 'cap' on each end of the 'barrel'.</text>
</comment>
<comment type="similarity">
    <text evidence="1">Belongs to the RuBisCO large chain family. Type I subfamily.</text>
</comment>
<evidence type="ECO:0000255" key="1">
    <source>
        <dbReference type="HAMAP-Rule" id="MF_01338"/>
    </source>
</evidence>
<proteinExistence type="inferred from homology"/>
<keyword id="KW-0007">Acetylation</keyword>
<keyword id="KW-0113">Calvin cycle</keyword>
<keyword id="KW-0120">Carbon dioxide fixation</keyword>
<keyword id="KW-0150">Chloroplast</keyword>
<keyword id="KW-1015">Disulfide bond</keyword>
<keyword id="KW-0456">Lyase</keyword>
<keyword id="KW-0460">Magnesium</keyword>
<keyword id="KW-0479">Metal-binding</keyword>
<keyword id="KW-0488">Methylation</keyword>
<keyword id="KW-0503">Monooxygenase</keyword>
<keyword id="KW-0560">Oxidoreductase</keyword>
<keyword id="KW-0601">Photorespiration</keyword>
<keyword id="KW-0602">Photosynthesis</keyword>
<keyword id="KW-0934">Plastid</keyword>
<accession>Q31992</accession>
<sequence length="453" mass="50291">MSPQTETKAGVGFKAGVKEYKLTYYTPEYETKDTDILAAFRVTPQPGVPPEERGAAVAAESSTGTWTTVWTDGLTSLDRYKGRCYHIEPVPGEEEQFIAYVAYPLDLFEEGSVTNMFTSIVGNVFGFKALRALRLEDLRIPVAYVKTFQGPPHGIQVERDKLNKYGRPLLGCTIKPKLGLSAKNYGRAVYECLRGGLDFTKDDENVNSQPFMRWRDRFLFCAEAIYKSQAETGEIKGHYLNATAGTCEEMIKRAVFARELGVPIVMHDYLTGGFTANTTLSHYCRDNGLLLHIHRAMHAVIDRQKNHGMHFRVLAKALRMSGGDHIHSGTVVGKLEGERDITLGFVDLLRDDYIEKDRSRGIYFTQDWVSLPGVIPVASRGIHVWHMPALTEIFGDDSVLQFGGGTLGHPWGNAPGAVANRVALEACVKARNEGRDLAAEGGEIIREACKWSP</sequence>
<dbReference type="EC" id="4.1.1.39" evidence="1"/>
<dbReference type="EMBL" id="X81097">
    <property type="protein sequence ID" value="CAA57003.1"/>
    <property type="molecule type" value="Genomic_DNA"/>
</dbReference>
<dbReference type="PIR" id="S47225">
    <property type="entry name" value="S47225"/>
</dbReference>
<dbReference type="SMR" id="Q31992"/>
<dbReference type="GO" id="GO:0009507">
    <property type="term" value="C:chloroplast"/>
    <property type="evidence" value="ECO:0007669"/>
    <property type="project" value="UniProtKB-SubCell"/>
</dbReference>
<dbReference type="GO" id="GO:0000287">
    <property type="term" value="F:magnesium ion binding"/>
    <property type="evidence" value="ECO:0007669"/>
    <property type="project" value="InterPro"/>
</dbReference>
<dbReference type="GO" id="GO:0004497">
    <property type="term" value="F:monooxygenase activity"/>
    <property type="evidence" value="ECO:0007669"/>
    <property type="project" value="UniProtKB-KW"/>
</dbReference>
<dbReference type="GO" id="GO:0016984">
    <property type="term" value="F:ribulose-bisphosphate carboxylase activity"/>
    <property type="evidence" value="ECO:0007669"/>
    <property type="project" value="UniProtKB-EC"/>
</dbReference>
<dbReference type="GO" id="GO:0009853">
    <property type="term" value="P:photorespiration"/>
    <property type="evidence" value="ECO:0007669"/>
    <property type="project" value="UniProtKB-KW"/>
</dbReference>
<dbReference type="GO" id="GO:0019253">
    <property type="term" value="P:reductive pentose-phosphate cycle"/>
    <property type="evidence" value="ECO:0007669"/>
    <property type="project" value="UniProtKB-KW"/>
</dbReference>
<dbReference type="CDD" id="cd08212">
    <property type="entry name" value="RuBisCO_large_I"/>
    <property type="match status" value="1"/>
</dbReference>
<dbReference type="FunFam" id="3.20.20.110:FF:000003">
    <property type="entry name" value="Ribulose bisphosphate carboxylase large chain"/>
    <property type="match status" value="1"/>
</dbReference>
<dbReference type="FunFam" id="3.30.70.150:FF:000001">
    <property type="entry name" value="Ribulose bisphosphate carboxylase large chain"/>
    <property type="match status" value="1"/>
</dbReference>
<dbReference type="Gene3D" id="3.20.20.110">
    <property type="entry name" value="Ribulose bisphosphate carboxylase, large subunit, C-terminal domain"/>
    <property type="match status" value="1"/>
</dbReference>
<dbReference type="Gene3D" id="3.30.70.150">
    <property type="entry name" value="RuBisCO large subunit, N-terminal domain"/>
    <property type="match status" value="1"/>
</dbReference>
<dbReference type="HAMAP" id="MF_01338">
    <property type="entry name" value="RuBisCO_L_type1"/>
    <property type="match status" value="1"/>
</dbReference>
<dbReference type="InterPro" id="IPR033966">
    <property type="entry name" value="RuBisCO"/>
</dbReference>
<dbReference type="InterPro" id="IPR020878">
    <property type="entry name" value="RuBisCo_large_chain_AS"/>
</dbReference>
<dbReference type="InterPro" id="IPR000685">
    <property type="entry name" value="RuBisCO_lsu_C"/>
</dbReference>
<dbReference type="InterPro" id="IPR036376">
    <property type="entry name" value="RuBisCO_lsu_C_sf"/>
</dbReference>
<dbReference type="InterPro" id="IPR017443">
    <property type="entry name" value="RuBisCO_lsu_fd_N"/>
</dbReference>
<dbReference type="InterPro" id="IPR036422">
    <property type="entry name" value="RuBisCO_lsu_N_sf"/>
</dbReference>
<dbReference type="InterPro" id="IPR020888">
    <property type="entry name" value="RuBisCO_lsuI"/>
</dbReference>
<dbReference type="NCBIfam" id="NF003252">
    <property type="entry name" value="PRK04208.1"/>
    <property type="match status" value="1"/>
</dbReference>
<dbReference type="PANTHER" id="PTHR42704">
    <property type="entry name" value="RIBULOSE BISPHOSPHATE CARBOXYLASE"/>
    <property type="match status" value="1"/>
</dbReference>
<dbReference type="PANTHER" id="PTHR42704:SF15">
    <property type="entry name" value="RIBULOSE BISPHOSPHATE CARBOXYLASE LARGE CHAIN"/>
    <property type="match status" value="1"/>
</dbReference>
<dbReference type="Pfam" id="PF00016">
    <property type="entry name" value="RuBisCO_large"/>
    <property type="match status" value="1"/>
</dbReference>
<dbReference type="Pfam" id="PF02788">
    <property type="entry name" value="RuBisCO_large_N"/>
    <property type="match status" value="1"/>
</dbReference>
<dbReference type="SFLD" id="SFLDG01052">
    <property type="entry name" value="RuBisCO"/>
    <property type="match status" value="1"/>
</dbReference>
<dbReference type="SFLD" id="SFLDS00014">
    <property type="entry name" value="RuBisCO"/>
    <property type="match status" value="1"/>
</dbReference>
<dbReference type="SFLD" id="SFLDG00301">
    <property type="entry name" value="RuBisCO-like_proteins"/>
    <property type="match status" value="1"/>
</dbReference>
<dbReference type="SUPFAM" id="SSF51649">
    <property type="entry name" value="RuBisCo, C-terminal domain"/>
    <property type="match status" value="1"/>
</dbReference>
<dbReference type="SUPFAM" id="SSF54966">
    <property type="entry name" value="RuBisCO, large subunit, small (N-terminal) domain"/>
    <property type="match status" value="1"/>
</dbReference>
<dbReference type="PROSITE" id="PS00157">
    <property type="entry name" value="RUBISCO_LARGE"/>
    <property type="match status" value="1"/>
</dbReference>
<feature type="propeptide" id="PRO_0000031193" evidence="1">
    <location>
        <begin position="1"/>
        <end position="2"/>
    </location>
</feature>
<feature type="chain" id="PRO_0000031194" description="Ribulose bisphosphate carboxylase large chain">
    <location>
        <begin position="3"/>
        <end position="453" status="greater than"/>
    </location>
</feature>
<feature type="active site" description="Proton acceptor" evidence="1">
    <location>
        <position position="175"/>
    </location>
</feature>
<feature type="active site" description="Proton acceptor" evidence="1">
    <location>
        <position position="294"/>
    </location>
</feature>
<feature type="binding site" description="in homodimeric partner" evidence="1">
    <location>
        <position position="123"/>
    </location>
    <ligand>
        <name>substrate</name>
    </ligand>
</feature>
<feature type="binding site" evidence="1">
    <location>
        <position position="173"/>
    </location>
    <ligand>
        <name>substrate</name>
    </ligand>
</feature>
<feature type="binding site" evidence="1">
    <location>
        <position position="177"/>
    </location>
    <ligand>
        <name>substrate</name>
    </ligand>
</feature>
<feature type="binding site" description="via carbamate group" evidence="1">
    <location>
        <position position="201"/>
    </location>
    <ligand>
        <name>Mg(2+)</name>
        <dbReference type="ChEBI" id="CHEBI:18420"/>
    </ligand>
</feature>
<feature type="binding site" evidence="1">
    <location>
        <position position="203"/>
    </location>
    <ligand>
        <name>Mg(2+)</name>
        <dbReference type="ChEBI" id="CHEBI:18420"/>
    </ligand>
</feature>
<feature type="binding site" evidence="1">
    <location>
        <position position="204"/>
    </location>
    <ligand>
        <name>Mg(2+)</name>
        <dbReference type="ChEBI" id="CHEBI:18420"/>
    </ligand>
</feature>
<feature type="binding site" evidence="1">
    <location>
        <position position="295"/>
    </location>
    <ligand>
        <name>substrate</name>
    </ligand>
</feature>
<feature type="binding site" evidence="1">
    <location>
        <position position="327"/>
    </location>
    <ligand>
        <name>substrate</name>
    </ligand>
</feature>
<feature type="binding site" evidence="1">
    <location>
        <position position="379"/>
    </location>
    <ligand>
        <name>substrate</name>
    </ligand>
</feature>
<feature type="site" description="Transition state stabilizer" evidence="1">
    <location>
        <position position="334"/>
    </location>
</feature>
<feature type="modified residue" description="N-acetylproline" evidence="1">
    <location>
        <position position="3"/>
    </location>
</feature>
<feature type="modified residue" description="N6,N6,N6-trimethyllysine" evidence="1">
    <location>
        <position position="14"/>
    </location>
</feature>
<feature type="modified residue" description="N6-carboxylysine" evidence="1">
    <location>
        <position position="201"/>
    </location>
</feature>
<feature type="disulfide bond" description="Interchain; in linked form" evidence="1">
    <location>
        <position position="247"/>
    </location>
</feature>
<feature type="non-terminal residue">
    <location>
        <position position="453"/>
    </location>
</feature>
<name>RBL_CRUGL</name>
<reference key="1">
    <citation type="journal article" date="1995" name="J. Mol. Evol.">
        <title>Comparison of the evolution of ribulose-1, 5-biphosphate carboxylase (rbcL) and atpB-rbcL noncoding spacer sequences in a recent plant group, the tribe Rubieae (Rubiaceae).</title>
        <authorList>
            <person name="Manen J.F."/>
            <person name="Natali A."/>
        </authorList>
    </citation>
    <scope>NUCLEOTIDE SEQUENCE [GENOMIC DNA]</scope>
</reference>
<gene>
    <name evidence="1" type="primary">rbcL</name>
</gene>
<geneLocation type="chloroplast"/>